<evidence type="ECO:0000250" key="1"/>
<evidence type="ECO:0000250" key="2">
    <source>
        <dbReference type="UniProtKB" id="Q969E2"/>
    </source>
</evidence>
<evidence type="ECO:0000255" key="3"/>
<evidence type="ECO:0000256" key="4">
    <source>
        <dbReference type="SAM" id="MobiDB-lite"/>
    </source>
</evidence>
<evidence type="ECO:0000305" key="5"/>
<dbReference type="EMBL" id="BT021641">
    <property type="protein sequence ID" value="AAX46488.1"/>
    <property type="molecule type" value="mRNA"/>
</dbReference>
<dbReference type="EMBL" id="BC113329">
    <property type="protein sequence ID" value="AAI13330.1"/>
    <property type="molecule type" value="mRNA"/>
</dbReference>
<dbReference type="RefSeq" id="NP_001019737.1">
    <property type="nucleotide sequence ID" value="NM_001024566.1"/>
</dbReference>
<dbReference type="RefSeq" id="XP_015327680.1">
    <property type="nucleotide sequence ID" value="XM_015472194.1"/>
</dbReference>
<dbReference type="RefSeq" id="XP_024850244.1">
    <property type="nucleotide sequence ID" value="XM_024994476.2"/>
</dbReference>
<dbReference type="SMR" id="Q58DF6"/>
<dbReference type="FunCoup" id="Q58DF6">
    <property type="interactions" value="1360"/>
</dbReference>
<dbReference type="STRING" id="9913.ENSBTAP00000055576"/>
<dbReference type="PaxDb" id="9913-ENSBTAP00000055576"/>
<dbReference type="Ensembl" id="ENSBTAT00000065646.3">
    <property type="protein sequence ID" value="ENSBTAP00000055576.1"/>
    <property type="gene ID" value="ENSBTAG00000045762.3"/>
</dbReference>
<dbReference type="GeneID" id="538819"/>
<dbReference type="KEGG" id="bta:538819"/>
<dbReference type="CTD" id="113178"/>
<dbReference type="VEuPathDB" id="HostDB:ENSBTAG00000045762"/>
<dbReference type="VGNC" id="VGNC:34318">
    <property type="gene designation" value="SCAMP4"/>
</dbReference>
<dbReference type="eggNOG" id="KOG3088">
    <property type="taxonomic scope" value="Eukaryota"/>
</dbReference>
<dbReference type="GeneTree" id="ENSGT00940000162150"/>
<dbReference type="HOGENOM" id="CLU_066546_1_0_1"/>
<dbReference type="InParanoid" id="Q58DF6"/>
<dbReference type="OMA" id="YPTGNQW"/>
<dbReference type="OrthoDB" id="3180714at2759"/>
<dbReference type="TreeFam" id="TF313797"/>
<dbReference type="Proteomes" id="UP000009136">
    <property type="component" value="Chromosome 7"/>
</dbReference>
<dbReference type="Bgee" id="ENSBTAG00000045762">
    <property type="expression patterns" value="Expressed in pons and 105 other cell types or tissues"/>
</dbReference>
<dbReference type="GO" id="GO:0055038">
    <property type="term" value="C:recycling endosome membrane"/>
    <property type="evidence" value="ECO:0000318"/>
    <property type="project" value="GO_Central"/>
</dbReference>
<dbReference type="GO" id="GO:0032588">
    <property type="term" value="C:trans-Golgi network membrane"/>
    <property type="evidence" value="ECO:0000318"/>
    <property type="project" value="GO_Central"/>
</dbReference>
<dbReference type="GO" id="GO:0015031">
    <property type="term" value="P:protein transport"/>
    <property type="evidence" value="ECO:0000318"/>
    <property type="project" value="GO_Central"/>
</dbReference>
<dbReference type="InterPro" id="IPR007273">
    <property type="entry name" value="SCAMP"/>
</dbReference>
<dbReference type="PANTHER" id="PTHR10687:SF11">
    <property type="entry name" value="SECRETORY CARRIER-ASSOCIATED MEMBRANE PROTEIN 4"/>
    <property type="match status" value="1"/>
</dbReference>
<dbReference type="PANTHER" id="PTHR10687">
    <property type="entry name" value="SECRETORY CARRIER-ASSOCIATED MEMBRANE PROTEIN SCAMP"/>
    <property type="match status" value="1"/>
</dbReference>
<dbReference type="Pfam" id="PF04144">
    <property type="entry name" value="SCAMP"/>
    <property type="match status" value="1"/>
</dbReference>
<comment type="function">
    <text evidence="1">Probably involved in membrane protein trafficking.</text>
</comment>
<comment type="subcellular location">
    <subcellularLocation>
        <location evidence="1">Membrane</location>
        <topology evidence="1">Multi-pass membrane protein</topology>
    </subcellularLocation>
</comment>
<comment type="similarity">
    <text evidence="5">Belongs to the SCAMP family.</text>
</comment>
<reference key="1">
    <citation type="submission" date="2005-03" db="EMBL/GenBank/DDBJ databases">
        <title>Sequencing and analysis of Bos taurus full-length insert cDNA clones.</title>
        <authorList>
            <person name="Harhay G.P."/>
            <person name="Sonstegard T.S."/>
            <person name="Clawson M.L."/>
            <person name="Heaton M.P."/>
            <person name="Keele J.W."/>
            <person name="Snelling W.M."/>
            <person name="Weidmann R.T."/>
            <person name="Smith T.P.L."/>
        </authorList>
    </citation>
    <scope>NUCLEOTIDE SEQUENCE [LARGE SCALE MRNA]</scope>
</reference>
<reference key="2">
    <citation type="submission" date="2006-02" db="EMBL/GenBank/DDBJ databases">
        <authorList>
            <consortium name="NIH - Mammalian Gene Collection (MGC) project"/>
        </authorList>
    </citation>
    <scope>NUCLEOTIDE SEQUENCE [LARGE SCALE MRNA]</scope>
    <source>
        <strain>Hereford</strain>
        <tissue>Uterus</tissue>
    </source>
</reference>
<sequence length="230" mass="25595">MSGKENNFPPLPKFIPLKPCFYQNFSDEIPIEHQVLVKRIYRLWLFYCATLGVNLVACLAWWIAGGSGANFGLALLWLLLFSPCGYVCWFRPAYKAFRSDSSFNFMAFFFIFGAQFILTIIQAVGFSGWGACGWLAAIGFFQTSVGAAVVMLLPAIMFSMSAAMMAVMIMKVHSIYRGTGGSFQKAQTEWSTGTWRNPPSREAQFNNFSGNSLPEYPTVPSYPASGGQWP</sequence>
<name>SCAM4_BOVIN</name>
<protein>
    <recommendedName>
        <fullName>Secretory carrier-associated membrane protein 4</fullName>
        <shortName>Secretory carrier membrane protein 4</shortName>
    </recommendedName>
</protein>
<organism>
    <name type="scientific">Bos taurus</name>
    <name type="common">Bovine</name>
    <dbReference type="NCBI Taxonomy" id="9913"/>
    <lineage>
        <taxon>Eukaryota</taxon>
        <taxon>Metazoa</taxon>
        <taxon>Chordata</taxon>
        <taxon>Craniata</taxon>
        <taxon>Vertebrata</taxon>
        <taxon>Euteleostomi</taxon>
        <taxon>Mammalia</taxon>
        <taxon>Eutheria</taxon>
        <taxon>Laurasiatheria</taxon>
        <taxon>Artiodactyla</taxon>
        <taxon>Ruminantia</taxon>
        <taxon>Pecora</taxon>
        <taxon>Bovidae</taxon>
        <taxon>Bovinae</taxon>
        <taxon>Bos</taxon>
    </lineage>
</organism>
<proteinExistence type="evidence at transcript level"/>
<gene>
    <name type="primary">SCAMP4</name>
</gene>
<feature type="chain" id="PRO_0000351646" description="Secretory carrier-associated membrane protein 4">
    <location>
        <begin position="1"/>
        <end position="230"/>
    </location>
</feature>
<feature type="topological domain" description="Cytoplasmic" evidence="3">
    <location>
        <begin position="1"/>
        <end position="39"/>
    </location>
</feature>
<feature type="transmembrane region" description="Helical" evidence="3">
    <location>
        <begin position="40"/>
        <end position="60"/>
    </location>
</feature>
<feature type="transmembrane region" description="Helical" evidence="3">
    <location>
        <begin position="61"/>
        <end position="81"/>
    </location>
</feature>
<feature type="transmembrane region" description="Helical" evidence="3">
    <location>
        <begin position="105"/>
        <end position="125"/>
    </location>
</feature>
<feature type="transmembrane region" description="Helical" evidence="3">
    <location>
        <begin position="149"/>
        <end position="169"/>
    </location>
</feature>
<feature type="topological domain" description="Cytoplasmic" evidence="3">
    <location>
        <begin position="170"/>
        <end position="230"/>
    </location>
</feature>
<feature type="region of interest" description="Disordered" evidence="4">
    <location>
        <begin position="208"/>
        <end position="230"/>
    </location>
</feature>
<feature type="modified residue" description="Phosphothreonine" evidence="2">
    <location>
        <position position="194"/>
    </location>
</feature>
<accession>Q58DF6</accession>
<keyword id="KW-0472">Membrane</keyword>
<keyword id="KW-0597">Phosphoprotein</keyword>
<keyword id="KW-0653">Protein transport</keyword>
<keyword id="KW-1185">Reference proteome</keyword>
<keyword id="KW-0812">Transmembrane</keyword>
<keyword id="KW-1133">Transmembrane helix</keyword>
<keyword id="KW-0813">Transport</keyword>